<accession>Q7A6F8</accession>
<gene>
    <name type="primary">fabF</name>
    <name type="ordered locus">SA0843</name>
</gene>
<organism>
    <name type="scientific">Staphylococcus aureus (strain N315)</name>
    <dbReference type="NCBI Taxonomy" id="158879"/>
    <lineage>
        <taxon>Bacteria</taxon>
        <taxon>Bacillati</taxon>
        <taxon>Bacillota</taxon>
        <taxon>Bacilli</taxon>
        <taxon>Bacillales</taxon>
        <taxon>Staphylococcaceae</taxon>
        <taxon>Staphylococcus</taxon>
    </lineage>
</organism>
<sequence>MSQNKRVVITGMGALSPIGNDVKTTWENALKGVNGIDKITRIDTEPYSVHLAGELKNFNIEDHIDKKEARRMDRFTQYAIVAAREAVKDAQLDINDNTADRIGVWIGSGIGGMETFEIAHKQLMDKGPRRVSPFFVPMLIPDMATGQVSIDLGAKGPNGATVTACATGTNSIGEAFKIVQRGDADAMITGGTEAPITHMAIAGFSASRALSTNDDIETACRPFQEGRDGFVMGEGAGILVIESLESAQARGANIYAEIVGYGTTGDAYHITAPAPEGEGGSRAMQAAMDDAGIEPKDVQYLNAHGTSTPVGDLNEVKAIKNTFGEAAKHLKVSSTKSMTGHLLGATGGIEAIFSALSIKDSKVAPTIHAVTPDPECDLDIVPNEAQDLDITYAMSNSLGFGGHNAVLVFKKFEA</sequence>
<reference key="1">
    <citation type="journal article" date="2001" name="Lancet">
        <title>Whole genome sequencing of meticillin-resistant Staphylococcus aureus.</title>
        <authorList>
            <person name="Kuroda M."/>
            <person name="Ohta T."/>
            <person name="Uchiyama I."/>
            <person name="Baba T."/>
            <person name="Yuzawa H."/>
            <person name="Kobayashi I."/>
            <person name="Cui L."/>
            <person name="Oguchi A."/>
            <person name="Aoki K."/>
            <person name="Nagai Y."/>
            <person name="Lian J.-Q."/>
            <person name="Ito T."/>
            <person name="Kanamori M."/>
            <person name="Matsumaru H."/>
            <person name="Maruyama A."/>
            <person name="Murakami H."/>
            <person name="Hosoyama A."/>
            <person name="Mizutani-Ui Y."/>
            <person name="Takahashi N.K."/>
            <person name="Sawano T."/>
            <person name="Inoue R."/>
            <person name="Kaito C."/>
            <person name="Sekimizu K."/>
            <person name="Hirakawa H."/>
            <person name="Kuhara S."/>
            <person name="Goto S."/>
            <person name="Yabuzaki J."/>
            <person name="Kanehisa M."/>
            <person name="Yamashita A."/>
            <person name="Oshima K."/>
            <person name="Furuya K."/>
            <person name="Yoshino C."/>
            <person name="Shiba T."/>
            <person name="Hattori M."/>
            <person name="Ogasawara N."/>
            <person name="Hayashi H."/>
            <person name="Hiramatsu K."/>
        </authorList>
    </citation>
    <scope>NUCLEOTIDE SEQUENCE [LARGE SCALE GENOMIC DNA]</scope>
    <source>
        <strain>N315</strain>
    </source>
</reference>
<reference key="2">
    <citation type="journal article" date="2005" name="J. Microbiol. Methods">
        <title>Correlation of proteomic and transcriptomic profiles of Staphylococcus aureus during the post-exponential phase of growth.</title>
        <authorList>
            <person name="Scherl A."/>
            <person name="Francois P."/>
            <person name="Bento M."/>
            <person name="Deshusses J.M."/>
            <person name="Charbonnier Y."/>
            <person name="Converset V."/>
            <person name="Huyghe A."/>
            <person name="Walter N."/>
            <person name="Hoogland C."/>
            <person name="Appel R.D."/>
            <person name="Sanchez J.-C."/>
            <person name="Zimmermann-Ivol C.G."/>
            <person name="Corthals G.L."/>
            <person name="Hochstrasser D.F."/>
            <person name="Schrenzel J."/>
        </authorList>
    </citation>
    <scope>IDENTIFICATION BY MASS SPECTROMETRY</scope>
    <source>
        <strain>N315</strain>
    </source>
</reference>
<reference key="3">
    <citation type="submission" date="2007-10" db="UniProtKB">
        <title>Shotgun proteomic analysis of total and membrane protein extracts of S. aureus strain N315.</title>
        <authorList>
            <person name="Vaezzadeh A.R."/>
            <person name="Deshusses J."/>
            <person name="Lescuyer P."/>
            <person name="Hochstrasser D.F."/>
        </authorList>
    </citation>
    <scope>IDENTIFICATION BY MASS SPECTROMETRY [LARGE SCALE ANALYSIS]</scope>
    <source>
        <strain>N315</strain>
    </source>
</reference>
<proteinExistence type="evidence at protein level"/>
<evidence type="ECO:0000250" key="1">
    <source>
        <dbReference type="UniProtKB" id="P0AAI5"/>
    </source>
</evidence>
<evidence type="ECO:0000255" key="2">
    <source>
        <dbReference type="PROSITE-ProRule" id="PRU01348"/>
    </source>
</evidence>
<evidence type="ECO:0000305" key="3"/>
<comment type="function">
    <text evidence="1">Involved in the type II fatty acid elongation cycle. Catalyzes the elongation of a wide range of acyl-ACP by the addition of two carbons from malonyl-ACP to an acyl acceptor. Can efficiently catalyze the conversion of palmitoleoyl-ACP (cis-hexadec-9-enoyl-ACP) to cis-vaccenoyl-ACP (cis-octadec-11-enoyl-ACP), an essential step in the thermal regulation of fatty acid composition.</text>
</comment>
<comment type="catalytic activity">
    <reaction evidence="1">
        <text>a fatty acyl-[ACP] + malonyl-[ACP] + H(+) = a 3-oxoacyl-[ACP] + holo-[ACP] + CO2</text>
        <dbReference type="Rhea" id="RHEA:22836"/>
        <dbReference type="Rhea" id="RHEA-COMP:9623"/>
        <dbReference type="Rhea" id="RHEA-COMP:9685"/>
        <dbReference type="Rhea" id="RHEA-COMP:9916"/>
        <dbReference type="Rhea" id="RHEA-COMP:14125"/>
        <dbReference type="ChEBI" id="CHEBI:15378"/>
        <dbReference type="ChEBI" id="CHEBI:16526"/>
        <dbReference type="ChEBI" id="CHEBI:64479"/>
        <dbReference type="ChEBI" id="CHEBI:78449"/>
        <dbReference type="ChEBI" id="CHEBI:78776"/>
        <dbReference type="ChEBI" id="CHEBI:138651"/>
    </reaction>
</comment>
<comment type="catalytic activity">
    <reaction evidence="1">
        <text>(9Z)-hexadecenoyl-[ACP] + malonyl-[ACP] + H(+) = 3-oxo-(11Z)-octadecenoyl-[ACP] + holo-[ACP] + CO2</text>
        <dbReference type="Rhea" id="RHEA:55040"/>
        <dbReference type="Rhea" id="RHEA-COMP:9623"/>
        <dbReference type="Rhea" id="RHEA-COMP:9685"/>
        <dbReference type="Rhea" id="RHEA-COMP:10800"/>
        <dbReference type="Rhea" id="RHEA-COMP:14074"/>
        <dbReference type="ChEBI" id="CHEBI:15378"/>
        <dbReference type="ChEBI" id="CHEBI:16526"/>
        <dbReference type="ChEBI" id="CHEBI:64479"/>
        <dbReference type="ChEBI" id="CHEBI:78449"/>
        <dbReference type="ChEBI" id="CHEBI:83989"/>
        <dbReference type="ChEBI" id="CHEBI:138538"/>
        <dbReference type="EC" id="2.3.1.179"/>
    </reaction>
</comment>
<comment type="pathway">
    <text evidence="1">Lipid metabolism; fatty acid biosynthesis.</text>
</comment>
<comment type="similarity">
    <text evidence="3">Belongs to the thiolase-like superfamily. Beta-ketoacyl-ACP synthases family.</text>
</comment>
<name>FABF_STAAN</name>
<dbReference type="EC" id="2.3.1.179" evidence="1"/>
<dbReference type="EMBL" id="BA000018">
    <property type="protein sequence ID" value="BAB42084.1"/>
    <property type="molecule type" value="Genomic_DNA"/>
</dbReference>
<dbReference type="PIR" id="A89866">
    <property type="entry name" value="A89866"/>
</dbReference>
<dbReference type="RefSeq" id="WP_000081231.1">
    <property type="nucleotide sequence ID" value="NC_002745.2"/>
</dbReference>
<dbReference type="SMR" id="Q7A6F8"/>
<dbReference type="EnsemblBacteria" id="BAB42084">
    <property type="protein sequence ID" value="BAB42084"/>
    <property type="gene ID" value="BAB42084"/>
</dbReference>
<dbReference type="KEGG" id="sau:SA0843"/>
<dbReference type="HOGENOM" id="CLU_000022_69_2_9"/>
<dbReference type="UniPathway" id="UPA00094"/>
<dbReference type="GO" id="GO:0005829">
    <property type="term" value="C:cytosol"/>
    <property type="evidence" value="ECO:0007669"/>
    <property type="project" value="TreeGrafter"/>
</dbReference>
<dbReference type="GO" id="GO:0004315">
    <property type="term" value="F:3-oxoacyl-[acyl-carrier-protein] synthase activity"/>
    <property type="evidence" value="ECO:0007669"/>
    <property type="project" value="UniProtKB-EC"/>
</dbReference>
<dbReference type="GO" id="GO:0006633">
    <property type="term" value="P:fatty acid biosynthetic process"/>
    <property type="evidence" value="ECO:0007669"/>
    <property type="project" value="UniProtKB-UniPathway"/>
</dbReference>
<dbReference type="CDD" id="cd00834">
    <property type="entry name" value="KAS_I_II"/>
    <property type="match status" value="1"/>
</dbReference>
<dbReference type="FunFam" id="3.40.47.10:FF:000026">
    <property type="entry name" value="3-oxoacyl-[acyl-carrier-protein] synthase 2"/>
    <property type="match status" value="1"/>
</dbReference>
<dbReference type="Gene3D" id="3.40.47.10">
    <property type="match status" value="1"/>
</dbReference>
<dbReference type="InterPro" id="IPR017568">
    <property type="entry name" value="3-oxoacyl-ACP_synth-2"/>
</dbReference>
<dbReference type="InterPro" id="IPR000794">
    <property type="entry name" value="Beta-ketoacyl_synthase"/>
</dbReference>
<dbReference type="InterPro" id="IPR018201">
    <property type="entry name" value="Ketoacyl_synth_AS"/>
</dbReference>
<dbReference type="InterPro" id="IPR014031">
    <property type="entry name" value="Ketoacyl_synth_C"/>
</dbReference>
<dbReference type="InterPro" id="IPR014030">
    <property type="entry name" value="Ketoacyl_synth_N"/>
</dbReference>
<dbReference type="InterPro" id="IPR020841">
    <property type="entry name" value="PKS_Beta-ketoAc_synthase_dom"/>
</dbReference>
<dbReference type="InterPro" id="IPR016039">
    <property type="entry name" value="Thiolase-like"/>
</dbReference>
<dbReference type="NCBIfam" id="TIGR03150">
    <property type="entry name" value="fabF"/>
    <property type="match status" value="1"/>
</dbReference>
<dbReference type="NCBIfam" id="NF004970">
    <property type="entry name" value="PRK06333.1"/>
    <property type="match status" value="1"/>
</dbReference>
<dbReference type="NCBIfam" id="NF005589">
    <property type="entry name" value="PRK07314.1"/>
    <property type="match status" value="1"/>
</dbReference>
<dbReference type="PANTHER" id="PTHR11712:SF336">
    <property type="entry name" value="3-OXOACYL-[ACYL-CARRIER-PROTEIN] SYNTHASE, MITOCHONDRIAL"/>
    <property type="match status" value="1"/>
</dbReference>
<dbReference type="PANTHER" id="PTHR11712">
    <property type="entry name" value="POLYKETIDE SYNTHASE-RELATED"/>
    <property type="match status" value="1"/>
</dbReference>
<dbReference type="Pfam" id="PF00109">
    <property type="entry name" value="ketoacyl-synt"/>
    <property type="match status" value="1"/>
</dbReference>
<dbReference type="Pfam" id="PF02801">
    <property type="entry name" value="Ketoacyl-synt_C"/>
    <property type="match status" value="1"/>
</dbReference>
<dbReference type="PIRSF" id="PIRSF000447">
    <property type="entry name" value="KAS_II"/>
    <property type="match status" value="1"/>
</dbReference>
<dbReference type="SMART" id="SM00825">
    <property type="entry name" value="PKS_KS"/>
    <property type="match status" value="1"/>
</dbReference>
<dbReference type="SUPFAM" id="SSF53901">
    <property type="entry name" value="Thiolase-like"/>
    <property type="match status" value="2"/>
</dbReference>
<dbReference type="PROSITE" id="PS00606">
    <property type="entry name" value="KS3_1"/>
    <property type="match status" value="1"/>
</dbReference>
<dbReference type="PROSITE" id="PS52004">
    <property type="entry name" value="KS3_2"/>
    <property type="match status" value="1"/>
</dbReference>
<keyword id="KW-0012">Acyltransferase</keyword>
<keyword id="KW-0275">Fatty acid biosynthesis</keyword>
<keyword id="KW-0276">Fatty acid metabolism</keyword>
<keyword id="KW-0444">Lipid biosynthesis</keyword>
<keyword id="KW-0443">Lipid metabolism</keyword>
<keyword id="KW-0808">Transferase</keyword>
<feature type="chain" id="PRO_0000180322" description="3-oxoacyl-[acyl-carrier-protein] synthase 2">
    <location>
        <begin position="1"/>
        <end position="414"/>
    </location>
</feature>
<feature type="domain" description="Ketosynthase family 3 (KS3)" evidence="2">
    <location>
        <begin position="4"/>
        <end position="411"/>
    </location>
</feature>
<feature type="active site" description="For beta-ketoacyl synthase activity" evidence="2">
    <location>
        <position position="165"/>
    </location>
</feature>
<feature type="active site" description="For beta-ketoacyl synthase activity" evidence="2">
    <location>
        <position position="304"/>
    </location>
</feature>
<feature type="active site" description="For beta-ketoacyl synthase activity" evidence="2">
    <location>
        <position position="341"/>
    </location>
</feature>
<protein>
    <recommendedName>
        <fullName>3-oxoacyl-[acyl-carrier-protein] synthase 2</fullName>
        <ecNumber evidence="1">2.3.1.179</ecNumber>
    </recommendedName>
    <alternativeName>
        <fullName>3-oxoacyl-[acyl-carrier-protein] synthase II</fullName>
    </alternativeName>
    <alternativeName>
        <fullName>Beta-ketoacyl-ACP synthase II</fullName>
        <shortName>KAS II</shortName>
    </alternativeName>
</protein>